<evidence type="ECO:0000305" key="1"/>
<evidence type="ECO:0007829" key="2">
    <source>
        <dbReference type="PDB" id="1Q6Z"/>
    </source>
</evidence>
<evidence type="ECO:0007829" key="3">
    <source>
        <dbReference type="PDB" id="2FN3"/>
    </source>
</evidence>
<evidence type="ECO:0007829" key="4">
    <source>
        <dbReference type="PDB" id="4GM4"/>
    </source>
</evidence>
<evidence type="ECO:0007829" key="5">
    <source>
        <dbReference type="PDB" id="4GP9"/>
    </source>
</evidence>
<evidence type="ECO:0007829" key="6">
    <source>
        <dbReference type="PDB" id="4K9K"/>
    </source>
</evidence>
<evidence type="ECO:0007829" key="7">
    <source>
        <dbReference type="PDB" id="5DEI"/>
    </source>
</evidence>
<accession>P20906</accession>
<proteinExistence type="evidence at protein level"/>
<dbReference type="EC" id="4.1.1.7"/>
<dbReference type="EMBL" id="AY143338">
    <property type="protein sequence ID" value="AAC15502.1"/>
    <property type="molecule type" value="Genomic_DNA"/>
</dbReference>
<dbReference type="PIR" id="C44767">
    <property type="entry name" value="C44767"/>
</dbReference>
<dbReference type="RefSeq" id="WP_016501746.1">
    <property type="nucleotide sequence ID" value="NZ_UGUX01000003.1"/>
</dbReference>
<dbReference type="PDB" id="1BFD">
    <property type="method" value="X-ray"/>
    <property type="resolution" value="1.60 A"/>
    <property type="chains" value="A=1-528"/>
</dbReference>
<dbReference type="PDB" id="1MCZ">
    <property type="method" value="X-ray"/>
    <property type="resolution" value="2.80 A"/>
    <property type="chains" value="A/B/C/D/E/F/G/H/I/J/K/L/M/N/O/P=1-528"/>
</dbReference>
<dbReference type="PDB" id="1PI3">
    <property type="method" value="X-ray"/>
    <property type="resolution" value="1.20 A"/>
    <property type="chains" value="A=1-528"/>
</dbReference>
<dbReference type="PDB" id="1PO7">
    <property type="method" value="X-ray"/>
    <property type="resolution" value="1.20 A"/>
    <property type="chains" value="A=1-528"/>
</dbReference>
<dbReference type="PDB" id="1Q6Z">
    <property type="method" value="X-ray"/>
    <property type="resolution" value="1.00 A"/>
    <property type="chains" value="A=1-528"/>
</dbReference>
<dbReference type="PDB" id="1YNO">
    <property type="method" value="X-ray"/>
    <property type="resolution" value="1.22 A"/>
    <property type="chains" value="A=2-528"/>
</dbReference>
<dbReference type="PDB" id="2FN3">
    <property type="method" value="X-ray"/>
    <property type="resolution" value="1.00 A"/>
    <property type="chains" value="A=1-528"/>
</dbReference>
<dbReference type="PDB" id="2FWN">
    <property type="method" value="X-ray"/>
    <property type="resolution" value="1.40 A"/>
    <property type="chains" value="A=1-528"/>
</dbReference>
<dbReference type="PDB" id="2V3W">
    <property type="method" value="X-ray"/>
    <property type="resolution" value="2.20 A"/>
    <property type="chains" value="A/B/C/D=1-528"/>
</dbReference>
<dbReference type="PDB" id="3F6B">
    <property type="method" value="X-ray"/>
    <property type="resolution" value="1.34 A"/>
    <property type="chains" value="X=2-526"/>
</dbReference>
<dbReference type="PDB" id="3F6E">
    <property type="method" value="X-ray"/>
    <property type="resolution" value="1.34 A"/>
    <property type="chains" value="X=2-526"/>
</dbReference>
<dbReference type="PDB" id="3FSJ">
    <property type="method" value="X-ray"/>
    <property type="resolution" value="1.37 A"/>
    <property type="chains" value="X=1-528"/>
</dbReference>
<dbReference type="PDB" id="3FZN">
    <property type="method" value="X-ray"/>
    <property type="resolution" value="1.62 A"/>
    <property type="chains" value="A/B/C/D=1-528"/>
</dbReference>
<dbReference type="PDB" id="4GG1">
    <property type="method" value="X-ray"/>
    <property type="resolution" value="1.07 A"/>
    <property type="chains" value="A=1-528"/>
</dbReference>
<dbReference type="PDB" id="4GM0">
    <property type="method" value="X-ray"/>
    <property type="resolution" value="1.07 A"/>
    <property type="chains" value="A=1-528"/>
</dbReference>
<dbReference type="PDB" id="4GM1">
    <property type="method" value="X-ray"/>
    <property type="resolution" value="1.26 A"/>
    <property type="chains" value="A=1-528"/>
</dbReference>
<dbReference type="PDB" id="4GM4">
    <property type="method" value="X-ray"/>
    <property type="resolution" value="1.28 A"/>
    <property type="chains" value="A=1-528"/>
</dbReference>
<dbReference type="PDB" id="4GP9">
    <property type="method" value="X-ray"/>
    <property type="resolution" value="1.07 A"/>
    <property type="chains" value="A=1-528"/>
</dbReference>
<dbReference type="PDB" id="4GPE">
    <property type="method" value="X-ray"/>
    <property type="resolution" value="1.39 A"/>
    <property type="chains" value="A=1-528"/>
</dbReference>
<dbReference type="PDB" id="4JD5">
    <property type="method" value="X-ray"/>
    <property type="resolution" value="1.33 A"/>
    <property type="chains" value="A=1-528"/>
</dbReference>
<dbReference type="PDB" id="4JU8">
    <property type="method" value="X-ray"/>
    <property type="resolution" value="1.25 A"/>
    <property type="chains" value="A=1-528"/>
</dbReference>
<dbReference type="PDB" id="4JU9">
    <property type="method" value="X-ray"/>
    <property type="resolution" value="1.12 A"/>
    <property type="chains" value="A=1-528"/>
</dbReference>
<dbReference type="PDB" id="4JUA">
    <property type="method" value="X-ray"/>
    <property type="resolution" value="1.15 A"/>
    <property type="chains" value="A=1-528"/>
</dbReference>
<dbReference type="PDB" id="4JUB">
    <property type="method" value="X-ray"/>
    <property type="resolution" value="1.90 A"/>
    <property type="chains" value="A/B/C/D=1-528"/>
</dbReference>
<dbReference type="PDB" id="4JUC">
    <property type="method" value="X-ray"/>
    <property type="resolution" value="2.30 A"/>
    <property type="chains" value="A/B/C/D=1-528"/>
</dbReference>
<dbReference type="PDB" id="4JUD">
    <property type="method" value="X-ray"/>
    <property type="resolution" value="1.65 A"/>
    <property type="chains" value="X=1-528"/>
</dbReference>
<dbReference type="PDB" id="4JUF">
    <property type="method" value="X-ray"/>
    <property type="resolution" value="2.15 A"/>
    <property type="chains" value="A/B/C/D=2-528"/>
</dbReference>
<dbReference type="PDB" id="4K9K">
    <property type="method" value="X-ray"/>
    <property type="resolution" value="1.30 A"/>
    <property type="chains" value="A=2-525"/>
</dbReference>
<dbReference type="PDB" id="4K9L">
    <property type="method" value="X-ray"/>
    <property type="resolution" value="1.65 A"/>
    <property type="chains" value="A=2-526"/>
</dbReference>
<dbReference type="PDB" id="4K9M">
    <property type="method" value="X-ray"/>
    <property type="resolution" value="1.15 A"/>
    <property type="chains" value="A=2-525"/>
</dbReference>
<dbReference type="PDB" id="4K9N">
    <property type="method" value="X-ray"/>
    <property type="resolution" value="1.70 A"/>
    <property type="chains" value="A/B/C/D=2-525"/>
</dbReference>
<dbReference type="PDB" id="4K9O">
    <property type="method" value="X-ray"/>
    <property type="resolution" value="1.89 A"/>
    <property type="chains" value="A/B/C/D=2-528"/>
</dbReference>
<dbReference type="PDB" id="4K9P">
    <property type="method" value="X-ray"/>
    <property type="resolution" value="2.24 A"/>
    <property type="chains" value="A/B/C/D=2-528"/>
</dbReference>
<dbReference type="PDB" id="4MPJ">
    <property type="method" value="X-ray"/>
    <property type="resolution" value="1.50 A"/>
    <property type="chains" value="A=1-528"/>
</dbReference>
<dbReference type="PDB" id="4MPP">
    <property type="method" value="X-ray"/>
    <property type="resolution" value="1.50 A"/>
    <property type="chains" value="A=1-528"/>
</dbReference>
<dbReference type="PDB" id="4MPR">
    <property type="method" value="X-ray"/>
    <property type="resolution" value="1.40 A"/>
    <property type="chains" value="A=1-528"/>
</dbReference>
<dbReference type="PDB" id="4MQ5">
    <property type="method" value="X-ray"/>
    <property type="resolution" value="1.50 A"/>
    <property type="chains" value="A=1-528"/>
</dbReference>
<dbReference type="PDB" id="4MZX">
    <property type="method" value="X-ray"/>
    <property type="resolution" value="1.56 A"/>
    <property type="chains" value="A=1-528"/>
</dbReference>
<dbReference type="PDB" id="4QEL">
    <property type="method" value="X-ray"/>
    <property type="resolution" value="1.43 A"/>
    <property type="chains" value="A=1-528"/>
</dbReference>
<dbReference type="PDB" id="5DEI">
    <property type="method" value="X-ray"/>
    <property type="resolution" value="1.30 A"/>
    <property type="chains" value="A/B/C/D=2-525"/>
</dbReference>
<dbReference type="PDB" id="5DGD">
    <property type="method" value="X-ray"/>
    <property type="resolution" value="1.13 A"/>
    <property type="chains" value="A=2-525"/>
</dbReference>
<dbReference type="PDB" id="5DGT">
    <property type="method" value="X-ray"/>
    <property type="resolution" value="1.08 A"/>
    <property type="chains" value="A=2-525"/>
</dbReference>
<dbReference type="PDB" id="6M2Y">
    <property type="method" value="X-ray"/>
    <property type="resolution" value="2.10 A"/>
    <property type="chains" value="A=1-528"/>
</dbReference>
<dbReference type="PDB" id="6M2Z">
    <property type="method" value="X-ray"/>
    <property type="resolution" value="2.35 A"/>
    <property type="chains" value="A=1-528"/>
</dbReference>
<dbReference type="PDB" id="8XBO">
    <property type="method" value="X-ray"/>
    <property type="resolution" value="2.53 A"/>
    <property type="chains" value="A=1-528"/>
</dbReference>
<dbReference type="PDB" id="8XBQ">
    <property type="method" value="X-ray"/>
    <property type="resolution" value="2.05 A"/>
    <property type="chains" value="A=1-528"/>
</dbReference>
<dbReference type="PDB" id="8XBR">
    <property type="method" value="X-ray"/>
    <property type="resolution" value="1.92 A"/>
    <property type="chains" value="A=1-526"/>
</dbReference>
<dbReference type="PDBsum" id="1BFD"/>
<dbReference type="PDBsum" id="1MCZ"/>
<dbReference type="PDBsum" id="1PI3"/>
<dbReference type="PDBsum" id="1PO7"/>
<dbReference type="PDBsum" id="1Q6Z"/>
<dbReference type="PDBsum" id="1YNO"/>
<dbReference type="PDBsum" id="2FN3"/>
<dbReference type="PDBsum" id="2FWN"/>
<dbReference type="PDBsum" id="2V3W"/>
<dbReference type="PDBsum" id="3F6B"/>
<dbReference type="PDBsum" id="3F6E"/>
<dbReference type="PDBsum" id="3FSJ"/>
<dbReference type="PDBsum" id="3FZN"/>
<dbReference type="PDBsum" id="4GG1"/>
<dbReference type="PDBsum" id="4GM0"/>
<dbReference type="PDBsum" id="4GM1"/>
<dbReference type="PDBsum" id="4GM4"/>
<dbReference type="PDBsum" id="4GP9"/>
<dbReference type="PDBsum" id="4GPE"/>
<dbReference type="PDBsum" id="4JD5"/>
<dbReference type="PDBsum" id="4JU8"/>
<dbReference type="PDBsum" id="4JU9"/>
<dbReference type="PDBsum" id="4JUA"/>
<dbReference type="PDBsum" id="4JUB"/>
<dbReference type="PDBsum" id="4JUC"/>
<dbReference type="PDBsum" id="4JUD"/>
<dbReference type="PDBsum" id="4JUF"/>
<dbReference type="PDBsum" id="4K9K"/>
<dbReference type="PDBsum" id="4K9L"/>
<dbReference type="PDBsum" id="4K9M"/>
<dbReference type="PDBsum" id="4K9N"/>
<dbReference type="PDBsum" id="4K9O"/>
<dbReference type="PDBsum" id="4K9P"/>
<dbReference type="PDBsum" id="4MPJ"/>
<dbReference type="PDBsum" id="4MPP"/>
<dbReference type="PDBsum" id="4MPR"/>
<dbReference type="PDBsum" id="4MQ5"/>
<dbReference type="PDBsum" id="4MZX"/>
<dbReference type="PDBsum" id="4QEL"/>
<dbReference type="PDBsum" id="5DEI"/>
<dbReference type="PDBsum" id="5DGD"/>
<dbReference type="PDBsum" id="5DGT"/>
<dbReference type="PDBsum" id="6M2Y"/>
<dbReference type="PDBsum" id="6M2Z"/>
<dbReference type="PDBsum" id="8XBO"/>
<dbReference type="PDBsum" id="8XBQ"/>
<dbReference type="PDBsum" id="8XBR"/>
<dbReference type="SMR" id="P20906"/>
<dbReference type="DrugBank" id="DB02280">
    <property type="generic name" value="(R)-Mandelic acid"/>
</dbReference>
<dbReference type="DrugBank" id="DB01987">
    <property type="generic name" value="Cocarboxylase"/>
</dbReference>
<dbReference type="GeneID" id="45526286"/>
<dbReference type="BioCyc" id="MetaCyc:MONOMER-2461"/>
<dbReference type="BRENDA" id="4.1.1.7">
    <property type="organism ID" value="5092"/>
</dbReference>
<dbReference type="SABIO-RK" id="P20906"/>
<dbReference type="UniPathway" id="UPA00873">
    <property type="reaction ID" value="UER00854"/>
</dbReference>
<dbReference type="EvolutionaryTrace" id="P20906"/>
<dbReference type="GO" id="GO:0003984">
    <property type="term" value="F:acetolactate synthase activity"/>
    <property type="evidence" value="ECO:0007669"/>
    <property type="project" value="TreeGrafter"/>
</dbReference>
<dbReference type="GO" id="GO:0050695">
    <property type="term" value="F:benzoylformate decarboxylase activity"/>
    <property type="evidence" value="ECO:0007669"/>
    <property type="project" value="UniProtKB-EC"/>
</dbReference>
<dbReference type="GO" id="GO:0050660">
    <property type="term" value="F:flavin adenine dinucleotide binding"/>
    <property type="evidence" value="ECO:0007669"/>
    <property type="project" value="TreeGrafter"/>
</dbReference>
<dbReference type="GO" id="GO:0000287">
    <property type="term" value="F:magnesium ion binding"/>
    <property type="evidence" value="ECO:0007669"/>
    <property type="project" value="InterPro"/>
</dbReference>
<dbReference type="GO" id="GO:0030976">
    <property type="term" value="F:thiamine pyrophosphate binding"/>
    <property type="evidence" value="ECO:0007669"/>
    <property type="project" value="InterPro"/>
</dbReference>
<dbReference type="GO" id="GO:0019596">
    <property type="term" value="P:mandelate catabolic process"/>
    <property type="evidence" value="ECO:0007669"/>
    <property type="project" value="UniProtKB-UniPathway"/>
</dbReference>
<dbReference type="CDD" id="cd02002">
    <property type="entry name" value="TPP_BFDC"/>
    <property type="match status" value="1"/>
</dbReference>
<dbReference type="CDD" id="cd07035">
    <property type="entry name" value="TPP_PYR_POX_like"/>
    <property type="match status" value="1"/>
</dbReference>
<dbReference type="Gene3D" id="3.40.50.970">
    <property type="match status" value="2"/>
</dbReference>
<dbReference type="Gene3D" id="3.40.50.1220">
    <property type="entry name" value="TPP-binding domain"/>
    <property type="match status" value="1"/>
</dbReference>
<dbReference type="InterPro" id="IPR029035">
    <property type="entry name" value="DHS-like_NAD/FAD-binding_dom"/>
</dbReference>
<dbReference type="InterPro" id="IPR029061">
    <property type="entry name" value="THDP-binding"/>
</dbReference>
<dbReference type="InterPro" id="IPR012000">
    <property type="entry name" value="Thiamin_PyroP_enz_cen_dom"/>
</dbReference>
<dbReference type="InterPro" id="IPR012001">
    <property type="entry name" value="Thiamin_PyroP_enz_TPP-bd_dom"/>
</dbReference>
<dbReference type="InterPro" id="IPR000399">
    <property type="entry name" value="TPP-bd_CS"/>
</dbReference>
<dbReference type="InterPro" id="IPR045229">
    <property type="entry name" value="TPP_enz"/>
</dbReference>
<dbReference type="InterPro" id="IPR011766">
    <property type="entry name" value="TPP_enzyme_TPP-bd"/>
</dbReference>
<dbReference type="NCBIfam" id="NF005485">
    <property type="entry name" value="PRK07092.1"/>
    <property type="match status" value="1"/>
</dbReference>
<dbReference type="PANTHER" id="PTHR18968:SF133">
    <property type="entry name" value="BENZOYLFORMATE DECARBOXYLASE"/>
    <property type="match status" value="1"/>
</dbReference>
<dbReference type="PANTHER" id="PTHR18968">
    <property type="entry name" value="THIAMINE PYROPHOSPHATE ENZYMES"/>
    <property type="match status" value="1"/>
</dbReference>
<dbReference type="Pfam" id="PF02775">
    <property type="entry name" value="TPP_enzyme_C"/>
    <property type="match status" value="1"/>
</dbReference>
<dbReference type="Pfam" id="PF00205">
    <property type="entry name" value="TPP_enzyme_M"/>
    <property type="match status" value="1"/>
</dbReference>
<dbReference type="Pfam" id="PF02776">
    <property type="entry name" value="TPP_enzyme_N"/>
    <property type="match status" value="1"/>
</dbReference>
<dbReference type="SUPFAM" id="SSF52467">
    <property type="entry name" value="DHS-like NAD/FAD-binding domain"/>
    <property type="match status" value="1"/>
</dbReference>
<dbReference type="SUPFAM" id="SSF52518">
    <property type="entry name" value="Thiamin diphosphate-binding fold (THDP-binding)"/>
    <property type="match status" value="2"/>
</dbReference>
<dbReference type="PROSITE" id="PS00187">
    <property type="entry name" value="TPP_ENZYMES"/>
    <property type="match status" value="1"/>
</dbReference>
<sequence length="528" mass="56355">MASVHGTTYELLRRQGIDTVFGNPGSNELPFLKDFPEDFRYILALQEACVVGIADGYAQASRKPAFINLHSAAGTGNAMGALSNAWNSHSPLIVTAGQQTRAMIGVEALLTNVDAANLPRPLVKWSYEPASAAEVPHAMSRAIHMASMAPQGPVYLSVPYDDWDKDADPQSHHLFDRHVSSSVRLNDQDLDILVKALNSASNPAIVLGPDVDAANANADCVMLAERLKAPVWVAPSAPRCPFPTRHPCFRGLMPAGIAAISQLLEGHDVVLVIGAPVFRYHQYDPGQYLKPGTRLISVTCDPLEAARAPMGDAIVADIGAMASALANLVEESSRQLPTAAPEPAKVDQDAGRLHPETVFDTLNDMAPENAIYLNESTSTTAQMWQRLNMRNPGSYYFCAAGGLGFALPAAIGVQLAEPERQVIAVIGDGSANYSISALWTAAQYNIPTIFVIMNNGTYGALRWFAGVLEAENVPGLDVPGIDFRALAKGYGVQALKADNLEQLKGSLQEALSAKGPVLIEVSTVSPVK</sequence>
<keyword id="KW-0002">3D-structure</keyword>
<keyword id="KW-0058">Aromatic hydrocarbons catabolism</keyword>
<keyword id="KW-0106">Calcium</keyword>
<keyword id="KW-0210">Decarboxylase</keyword>
<keyword id="KW-0903">Direct protein sequencing</keyword>
<keyword id="KW-0456">Lyase</keyword>
<keyword id="KW-0460">Magnesium</keyword>
<keyword id="KW-0463">Mandelate pathway</keyword>
<keyword id="KW-0479">Metal-binding</keyword>
<keyword id="KW-0786">Thiamine pyrophosphate</keyword>
<name>MDLC_PSEPU</name>
<feature type="chain" id="PRO_0000090820" description="Benzoylformate decarboxylase">
    <location>
        <begin position="1"/>
        <end position="528"/>
    </location>
</feature>
<feature type="region of interest" description="Thiamine pyrophosphate binding">
    <location>
        <begin position="377"/>
        <end position="460"/>
    </location>
</feature>
<feature type="binding site">
    <location>
        <position position="117"/>
    </location>
    <ligand>
        <name>Mg(2+)</name>
        <dbReference type="ChEBI" id="CHEBI:18420"/>
    </ligand>
</feature>
<feature type="binding site">
    <location>
        <position position="118"/>
    </location>
    <ligand>
        <name>Mg(2+)</name>
        <dbReference type="ChEBI" id="CHEBI:18420"/>
    </ligand>
</feature>
<feature type="binding site">
    <location>
        <position position="120"/>
    </location>
    <ligand>
        <name>Mg(2+)</name>
        <dbReference type="ChEBI" id="CHEBI:18420"/>
    </ligand>
</feature>
<feature type="binding site">
    <location>
        <position position="428"/>
    </location>
    <ligand>
        <name>Ca(2+)</name>
        <dbReference type="ChEBI" id="CHEBI:29108"/>
    </ligand>
</feature>
<feature type="binding site">
    <location>
        <position position="455"/>
    </location>
    <ligand>
        <name>Ca(2+)</name>
        <dbReference type="ChEBI" id="CHEBI:29108"/>
    </ligand>
</feature>
<feature type="binding site">
    <location>
        <position position="457"/>
    </location>
    <ligand>
        <name>Ca(2+)</name>
        <dbReference type="ChEBI" id="CHEBI:29108"/>
    </ligand>
</feature>
<feature type="helix" evidence="2">
    <location>
        <begin position="4"/>
        <end position="14"/>
    </location>
</feature>
<feature type="strand" evidence="2">
    <location>
        <begin position="19"/>
        <end position="22"/>
    </location>
</feature>
<feature type="helix" evidence="2">
    <location>
        <begin position="26"/>
        <end position="28"/>
    </location>
</feature>
<feature type="helix" evidence="2">
    <location>
        <begin position="29"/>
        <end position="32"/>
    </location>
</feature>
<feature type="strand" evidence="2">
    <location>
        <begin position="40"/>
        <end position="43"/>
    </location>
</feature>
<feature type="helix" evidence="2">
    <location>
        <begin position="47"/>
        <end position="61"/>
    </location>
</feature>
<feature type="strand" evidence="2">
    <location>
        <begin position="65"/>
        <end position="70"/>
    </location>
</feature>
<feature type="helix" evidence="2">
    <location>
        <begin position="71"/>
        <end position="77"/>
    </location>
</feature>
<feature type="helix" evidence="2">
    <location>
        <begin position="79"/>
        <end position="87"/>
    </location>
</feature>
<feature type="strand" evidence="2">
    <location>
        <begin position="92"/>
        <end position="98"/>
    </location>
</feature>
<feature type="helix" evidence="2">
    <location>
        <begin position="101"/>
        <end position="104"/>
    </location>
</feature>
<feature type="turn" evidence="2">
    <location>
        <begin position="105"/>
        <end position="107"/>
    </location>
</feature>
<feature type="helix" evidence="2">
    <location>
        <begin position="115"/>
        <end position="117"/>
    </location>
</feature>
<feature type="turn" evidence="3">
    <location>
        <begin position="118"/>
        <end position="121"/>
    </location>
</feature>
<feature type="strand" evidence="6">
    <location>
        <begin position="124"/>
        <end position="127"/>
    </location>
</feature>
<feature type="helix" evidence="2">
    <location>
        <begin position="132"/>
        <end position="134"/>
    </location>
</feature>
<feature type="helix" evidence="2">
    <location>
        <begin position="135"/>
        <end position="147"/>
    </location>
</feature>
<feature type="strand" evidence="2">
    <location>
        <begin position="148"/>
        <end position="150"/>
    </location>
</feature>
<feature type="strand" evidence="2">
    <location>
        <begin position="154"/>
        <end position="159"/>
    </location>
</feature>
<feature type="helix" evidence="2">
    <location>
        <begin position="160"/>
        <end position="162"/>
    </location>
</feature>
<feature type="helix" evidence="2">
    <location>
        <begin position="169"/>
        <end position="174"/>
    </location>
</feature>
<feature type="strand" evidence="7">
    <location>
        <begin position="183"/>
        <end position="185"/>
    </location>
</feature>
<feature type="helix" evidence="2">
    <location>
        <begin position="187"/>
        <end position="199"/>
    </location>
</feature>
<feature type="strand" evidence="2">
    <location>
        <begin position="204"/>
        <end position="207"/>
    </location>
</feature>
<feature type="helix" evidence="2">
    <location>
        <begin position="209"/>
        <end position="213"/>
    </location>
</feature>
<feature type="helix" evidence="2">
    <location>
        <begin position="217"/>
        <end position="227"/>
    </location>
</feature>
<feature type="strand" evidence="2">
    <location>
        <begin position="231"/>
        <end position="233"/>
    </location>
</feature>
<feature type="strand" evidence="2">
    <location>
        <begin position="249"/>
        <end position="252"/>
    </location>
</feature>
<feature type="helix" evidence="2">
    <location>
        <begin position="257"/>
        <end position="264"/>
    </location>
</feature>
<feature type="strand" evidence="2">
    <location>
        <begin position="268"/>
        <end position="275"/>
    </location>
</feature>
<feature type="strand" evidence="2">
    <location>
        <begin position="294"/>
        <end position="300"/>
    </location>
</feature>
<feature type="helix" evidence="2">
    <location>
        <begin position="302"/>
        <end position="307"/>
    </location>
</feature>
<feature type="strand" evidence="2">
    <location>
        <begin position="309"/>
        <end position="316"/>
    </location>
</feature>
<feature type="helix" evidence="2">
    <location>
        <begin position="318"/>
        <end position="328"/>
    </location>
</feature>
<feature type="strand" evidence="2">
    <location>
        <begin position="350"/>
        <end position="353"/>
    </location>
</feature>
<feature type="helix" evidence="2">
    <location>
        <begin position="355"/>
        <end position="365"/>
    </location>
</feature>
<feature type="strand" evidence="2">
    <location>
        <begin position="371"/>
        <end position="375"/>
    </location>
</feature>
<feature type="helix" evidence="5">
    <location>
        <begin position="377"/>
        <end position="379"/>
    </location>
</feature>
<feature type="helix" evidence="2">
    <location>
        <begin position="380"/>
        <end position="386"/>
    </location>
</feature>
<feature type="strand" evidence="2">
    <location>
        <begin position="391"/>
        <end position="393"/>
    </location>
</feature>
<feature type="strand" evidence="2">
    <location>
        <begin position="395"/>
        <end position="397"/>
    </location>
</feature>
<feature type="strand" evidence="4">
    <location>
        <begin position="403"/>
        <end position="405"/>
    </location>
</feature>
<feature type="helix" evidence="2">
    <location>
        <begin position="406"/>
        <end position="416"/>
    </location>
</feature>
<feature type="strand" evidence="2">
    <location>
        <begin position="422"/>
        <end position="427"/>
    </location>
</feature>
<feature type="helix" evidence="2">
    <location>
        <begin position="428"/>
        <end position="431"/>
    </location>
</feature>
<feature type="turn" evidence="2">
    <location>
        <begin position="432"/>
        <end position="434"/>
    </location>
</feature>
<feature type="helix" evidence="2">
    <location>
        <begin position="435"/>
        <end position="437"/>
    </location>
</feature>
<feature type="helix" evidence="2">
    <location>
        <begin position="438"/>
        <end position="444"/>
    </location>
</feature>
<feature type="strand" evidence="2">
    <location>
        <begin position="449"/>
        <end position="454"/>
    </location>
</feature>
<feature type="helix" evidence="2">
    <location>
        <begin position="459"/>
        <end position="468"/>
    </location>
</feature>
<feature type="helix" evidence="2">
    <location>
        <begin position="483"/>
        <end position="490"/>
    </location>
</feature>
<feature type="strand" evidence="2">
    <location>
        <begin position="493"/>
        <end position="499"/>
    </location>
</feature>
<feature type="helix" evidence="2">
    <location>
        <begin position="500"/>
        <end position="511"/>
    </location>
</feature>
<feature type="strand" evidence="2">
    <location>
        <begin position="517"/>
        <end position="523"/>
    </location>
</feature>
<gene>
    <name type="primary">mdlC</name>
</gene>
<comment type="catalytic activity">
    <reaction>
        <text>phenylglyoxylate + H(+) = benzaldehyde + CO2</text>
        <dbReference type="Rhea" id="RHEA:23368"/>
        <dbReference type="ChEBI" id="CHEBI:15378"/>
        <dbReference type="ChEBI" id="CHEBI:16526"/>
        <dbReference type="ChEBI" id="CHEBI:17169"/>
        <dbReference type="ChEBI" id="CHEBI:36656"/>
        <dbReference type="EC" id="4.1.1.7"/>
    </reaction>
</comment>
<comment type="cofactor">
    <cofactor>
        <name>Ca(2+)</name>
        <dbReference type="ChEBI" id="CHEBI:29108"/>
    </cofactor>
    <text>Binds 1 Ca(2+) ion per subunit.</text>
</comment>
<comment type="cofactor">
    <cofactor>
        <name>thiamine diphosphate</name>
        <dbReference type="ChEBI" id="CHEBI:58937"/>
    </cofactor>
    <text>Binds 1 thiamine pyrophosphate per subunit.</text>
</comment>
<comment type="cofactor">
    <cofactor>
        <name>Mg(2+)</name>
        <dbReference type="ChEBI" id="CHEBI:18420"/>
    </cofactor>
    <text>Binds 1 Mg(2+) ion per dimer.</text>
</comment>
<comment type="pathway">
    <text>Aromatic compound metabolism; (R)-mandelate degradation; benzoate from (R)-mandelate: step 3/4.</text>
</comment>
<comment type="subunit">
    <text>Homotetramer.</text>
</comment>
<comment type="similarity">
    <text evidence="1">Belongs to the TPP enzyme family.</text>
</comment>
<protein>
    <recommendedName>
        <fullName>Benzoylformate decarboxylase</fullName>
        <shortName>BFD</shortName>
        <shortName>BFDC</shortName>
        <ecNumber>4.1.1.7</ecNumber>
    </recommendedName>
</protein>
<reference key="1">
    <citation type="journal article" date="1990" name="Biochemistry">
        <title>Mandelate pathway of Pseudomonas putida: sequence relationships involving mandelate racemase, (S)-mandelate dehydrogenase, and benzoylformate decarboxylase and expression of benzoylformate decarboxylase in Escherichia coli.</title>
        <authorList>
            <person name="Tsou A.Y."/>
            <person name="Ransom S.C."/>
            <person name="Gerlt J.A."/>
            <person name="Buechter D.D."/>
            <person name="Babbitt P.C."/>
            <person name="Kenyon G.L."/>
        </authorList>
    </citation>
    <scope>NUCLEOTIDE SEQUENCE [GENOMIC DNA]</scope>
    <scope>PROTEIN SEQUENCE OF 1-19</scope>
    <source>
        <strain>ATCC 12633 / DSM 291 / JCM 13063 / CCUG 12690 / LMG 2257 / NBRC 14164 / NCIMB 9494 / NCTC 10936 / VKM B-2187 / Stanier 90</strain>
    </source>
</reference>
<reference key="2">
    <citation type="journal article" date="1995" name="Protein Sci.">
        <title>Purification and crystallization of benzoylformate decarboxylase.</title>
        <authorList>
            <person name="Hasson M.S."/>
            <person name="Muscate A."/>
            <person name="Henehan G.T.M."/>
            <person name="Guidinger P.F."/>
            <person name="Petsko G.A."/>
            <person name="Ringe D."/>
            <person name="Kenyon G.L."/>
        </authorList>
    </citation>
    <scope>CHARACTERIZATION</scope>
    <scope>CRYSTALLIZATION</scope>
    <source>
        <strain>ATCC 12633 / DSM 291 / JCM 13063 / CCUG 12690 / LMG 2257 / NBRC 14164 / NCIMB 9494 / NCTC 10936 / VKM B-2187 / Stanier 90</strain>
    </source>
</reference>
<reference key="3">
    <citation type="journal article" date="1998" name="Biochemistry">
        <title>The crystal structure of benzoylformate decarboxylase at 1.6 A resolution: diversity of catalytic residues in thiamin diphosphate-dependent enzymes.</title>
        <authorList>
            <person name="Hasson M.S."/>
            <person name="Muscate A."/>
            <person name="McLeish M.J."/>
            <person name="Polovnikova L.S."/>
            <person name="Gerlt J.A."/>
            <person name="Kenyon G.L."/>
            <person name="Petsko G.A."/>
            <person name="Ringe D."/>
        </authorList>
    </citation>
    <scope>X-RAY CRYSTALLOGRAPHY (1.6 ANGSTROMS)</scope>
    <scope>SEQUENCE REVISION TO C-TERMINUS</scope>
    <source>
        <strain>ATCC 12633 / DSM 291 / JCM 13063 / CCUG 12690 / LMG 2257 / NBRC 14164 / NCIMB 9494 / NCTC 10936 / VKM B-2187 / Stanier 90</strain>
    </source>
</reference>
<organism>
    <name type="scientific">Pseudomonas putida</name>
    <name type="common">Arthrobacter siderocapsulatus</name>
    <dbReference type="NCBI Taxonomy" id="303"/>
    <lineage>
        <taxon>Bacteria</taxon>
        <taxon>Pseudomonadati</taxon>
        <taxon>Pseudomonadota</taxon>
        <taxon>Gammaproteobacteria</taxon>
        <taxon>Pseudomonadales</taxon>
        <taxon>Pseudomonadaceae</taxon>
        <taxon>Pseudomonas</taxon>
    </lineage>
</organism>